<gene>
    <name evidence="1" type="primary">rnp4</name>
    <name type="ordered locus">Mbur_1510</name>
</gene>
<name>RNP4_METBU</name>
<protein>
    <recommendedName>
        <fullName evidence="1">Ribonuclease P protein component 4</fullName>
        <shortName evidence="1">RNase P component 4</shortName>
        <ecNumber evidence="1">3.1.26.5</ecNumber>
    </recommendedName>
    <alternativeName>
        <fullName evidence="1">Rpp21</fullName>
    </alternativeName>
</protein>
<organism>
    <name type="scientific">Methanococcoides burtonii (strain DSM 6242 / NBRC 107633 / OCM 468 / ACE-M)</name>
    <dbReference type="NCBI Taxonomy" id="259564"/>
    <lineage>
        <taxon>Archaea</taxon>
        <taxon>Methanobacteriati</taxon>
        <taxon>Methanobacteriota</taxon>
        <taxon>Stenosarchaea group</taxon>
        <taxon>Methanomicrobia</taxon>
        <taxon>Methanosarcinales</taxon>
        <taxon>Methanosarcinaceae</taxon>
        <taxon>Methanococcoides</taxon>
    </lineage>
</organism>
<proteinExistence type="inferred from homology"/>
<feature type="chain" id="PRO_1000148372" description="Ribonuclease P protein component 4">
    <location>
        <begin position="1"/>
        <end position="108"/>
    </location>
</feature>
<feature type="binding site" evidence="1">
    <location>
        <position position="67"/>
    </location>
    <ligand>
        <name>Zn(2+)</name>
        <dbReference type="ChEBI" id="CHEBI:29105"/>
    </ligand>
</feature>
<feature type="binding site" evidence="1">
    <location>
        <position position="70"/>
    </location>
    <ligand>
        <name>Zn(2+)</name>
        <dbReference type="ChEBI" id="CHEBI:29105"/>
    </ligand>
</feature>
<feature type="binding site" evidence="1">
    <location>
        <position position="93"/>
    </location>
    <ligand>
        <name>Zn(2+)</name>
        <dbReference type="ChEBI" id="CHEBI:29105"/>
    </ligand>
</feature>
<feature type="binding site" evidence="1">
    <location>
        <position position="96"/>
    </location>
    <ligand>
        <name>Zn(2+)</name>
        <dbReference type="ChEBI" id="CHEBI:29105"/>
    </ligand>
</feature>
<sequence>MYMSRMKKKQKNIIKDVASERIERLFKLAAEEYSSNPGRSDRYVHLARRIGMKYRIRFPSPLKRKMCRGCSSYLVPGSSSRVRLHGRYMTITCLKCGREMRIPYHLKE</sequence>
<evidence type="ECO:0000255" key="1">
    <source>
        <dbReference type="HAMAP-Rule" id="MF_00757"/>
    </source>
</evidence>
<accession>Q12VV9</accession>
<keyword id="KW-0963">Cytoplasm</keyword>
<keyword id="KW-0255">Endonuclease</keyword>
<keyword id="KW-0378">Hydrolase</keyword>
<keyword id="KW-0479">Metal-binding</keyword>
<keyword id="KW-0540">Nuclease</keyword>
<keyword id="KW-0819">tRNA processing</keyword>
<keyword id="KW-0862">Zinc</keyword>
<reference key="1">
    <citation type="journal article" date="2009" name="ISME J.">
        <title>The genome sequence of the psychrophilic archaeon, Methanococcoides burtonii: the role of genome evolution in cold adaptation.</title>
        <authorList>
            <person name="Allen M.A."/>
            <person name="Lauro F.M."/>
            <person name="Williams T.J."/>
            <person name="Burg D."/>
            <person name="Siddiqui K.S."/>
            <person name="De Francisci D."/>
            <person name="Chong K.W."/>
            <person name="Pilak O."/>
            <person name="Chew H.H."/>
            <person name="De Maere M.Z."/>
            <person name="Ting L."/>
            <person name="Katrib M."/>
            <person name="Ng C."/>
            <person name="Sowers K.R."/>
            <person name="Galperin M.Y."/>
            <person name="Anderson I.J."/>
            <person name="Ivanova N."/>
            <person name="Dalin E."/>
            <person name="Martinez M."/>
            <person name="Lapidus A."/>
            <person name="Hauser L."/>
            <person name="Land M."/>
            <person name="Thomas T."/>
            <person name="Cavicchioli R."/>
        </authorList>
    </citation>
    <scope>NUCLEOTIDE SEQUENCE [LARGE SCALE GENOMIC DNA]</scope>
    <source>
        <strain>DSM 6242 / NBRC 107633 / OCM 468 / ACE-M</strain>
    </source>
</reference>
<dbReference type="EC" id="3.1.26.5" evidence="1"/>
<dbReference type="EMBL" id="CP000300">
    <property type="protein sequence ID" value="ABE52417.1"/>
    <property type="molecule type" value="Genomic_DNA"/>
</dbReference>
<dbReference type="SMR" id="Q12VV9"/>
<dbReference type="STRING" id="259564.Mbur_1510"/>
<dbReference type="KEGG" id="mbu:Mbur_1510"/>
<dbReference type="HOGENOM" id="CLU_079140_3_0_2"/>
<dbReference type="OrthoDB" id="10058at2157"/>
<dbReference type="Proteomes" id="UP000001979">
    <property type="component" value="Chromosome"/>
</dbReference>
<dbReference type="GO" id="GO:0005737">
    <property type="term" value="C:cytoplasm"/>
    <property type="evidence" value="ECO:0007669"/>
    <property type="project" value="UniProtKB-SubCell"/>
</dbReference>
<dbReference type="GO" id="GO:0030677">
    <property type="term" value="C:ribonuclease P complex"/>
    <property type="evidence" value="ECO:0007669"/>
    <property type="project" value="UniProtKB-UniRule"/>
</dbReference>
<dbReference type="GO" id="GO:0004526">
    <property type="term" value="F:ribonuclease P activity"/>
    <property type="evidence" value="ECO:0007669"/>
    <property type="project" value="UniProtKB-UniRule"/>
</dbReference>
<dbReference type="GO" id="GO:0008270">
    <property type="term" value="F:zinc ion binding"/>
    <property type="evidence" value="ECO:0007669"/>
    <property type="project" value="UniProtKB-UniRule"/>
</dbReference>
<dbReference type="GO" id="GO:0001682">
    <property type="term" value="P:tRNA 5'-leader removal"/>
    <property type="evidence" value="ECO:0007669"/>
    <property type="project" value="UniProtKB-UniRule"/>
</dbReference>
<dbReference type="Gene3D" id="6.20.50.20">
    <property type="match status" value="1"/>
</dbReference>
<dbReference type="Gene3D" id="1.20.5.420">
    <property type="entry name" value="Immunoglobulin FC, subunit C"/>
    <property type="match status" value="1"/>
</dbReference>
<dbReference type="HAMAP" id="MF_00757">
    <property type="entry name" value="RNase_P_4"/>
    <property type="match status" value="1"/>
</dbReference>
<dbReference type="InterPro" id="IPR016432">
    <property type="entry name" value="RNP4"/>
</dbReference>
<dbReference type="InterPro" id="IPR007175">
    <property type="entry name" value="Rpr2/Snm1/Rpp21"/>
</dbReference>
<dbReference type="PANTHER" id="PTHR14742:SF0">
    <property type="entry name" value="RIBONUCLEASE P PROTEIN SUBUNIT P21"/>
    <property type="match status" value="1"/>
</dbReference>
<dbReference type="PANTHER" id="PTHR14742">
    <property type="entry name" value="RIBONUCLEASE P SUBUNIT P21"/>
    <property type="match status" value="1"/>
</dbReference>
<dbReference type="Pfam" id="PF04032">
    <property type="entry name" value="Rpr2"/>
    <property type="match status" value="1"/>
</dbReference>
<dbReference type="PIRSF" id="PIRSF004878">
    <property type="entry name" value="RNase_P_4"/>
    <property type="match status" value="1"/>
</dbReference>
<comment type="function">
    <text evidence="1">Part of ribonuclease P, a protein complex that generates mature tRNA molecules by cleaving their 5'-ends.</text>
</comment>
<comment type="catalytic activity">
    <reaction evidence="1">
        <text>Endonucleolytic cleavage of RNA, removing 5'-extranucleotides from tRNA precursor.</text>
        <dbReference type="EC" id="3.1.26.5"/>
    </reaction>
</comment>
<comment type="cofactor">
    <cofactor evidence="1">
        <name>Zn(2+)</name>
        <dbReference type="ChEBI" id="CHEBI:29105"/>
    </cofactor>
    <text evidence="1">Binds 1 zinc ion per subunit.</text>
</comment>
<comment type="subunit">
    <text evidence="1">Consists of a catalytic RNA component and at least 4-5 protein subunits.</text>
</comment>
<comment type="subcellular location">
    <subcellularLocation>
        <location evidence="1">Cytoplasm</location>
    </subcellularLocation>
</comment>
<comment type="similarity">
    <text evidence="1">Belongs to the eukaryotic/archaeal RNase P protein component 4 family.</text>
</comment>